<protein>
    <recommendedName>
        <fullName>Probable crossover junction endonuclease mus81</fullName>
        <ecNumber>3.1.22.-</ecNumber>
    </recommendedName>
</protein>
<feature type="chain" id="PRO_0000367256" description="Probable crossover junction endonuclease mus81">
    <location>
        <begin position="1"/>
        <end position="920"/>
    </location>
</feature>
<feature type="domain" description="ERCC4">
    <location>
        <begin position="635"/>
        <end position="731"/>
    </location>
</feature>
<feature type="region of interest" description="Disordered" evidence="2">
    <location>
        <begin position="90"/>
        <end position="190"/>
    </location>
</feature>
<feature type="region of interest" description="Disordered" evidence="2">
    <location>
        <begin position="265"/>
        <end position="297"/>
    </location>
</feature>
<feature type="region of interest" description="Disordered" evidence="2">
    <location>
        <begin position="335"/>
        <end position="376"/>
    </location>
</feature>
<feature type="region of interest" description="Disordered" evidence="2">
    <location>
        <begin position="457"/>
        <end position="490"/>
    </location>
</feature>
<feature type="region of interest" description="Disordered" evidence="2">
    <location>
        <begin position="505"/>
        <end position="560"/>
    </location>
</feature>
<feature type="region of interest" description="Disordered" evidence="2">
    <location>
        <begin position="595"/>
        <end position="621"/>
    </location>
</feature>
<feature type="compositionally biased region" description="Low complexity" evidence="2">
    <location>
        <begin position="108"/>
        <end position="142"/>
    </location>
</feature>
<feature type="compositionally biased region" description="Low complexity" evidence="2">
    <location>
        <begin position="152"/>
        <end position="165"/>
    </location>
</feature>
<feature type="compositionally biased region" description="Polar residues" evidence="2">
    <location>
        <begin position="166"/>
        <end position="178"/>
    </location>
</feature>
<feature type="compositionally biased region" description="Low complexity" evidence="2">
    <location>
        <begin position="265"/>
        <end position="282"/>
    </location>
</feature>
<feature type="compositionally biased region" description="Low complexity" evidence="2">
    <location>
        <begin position="351"/>
        <end position="372"/>
    </location>
</feature>
<feature type="compositionally biased region" description="Basic residues" evidence="2">
    <location>
        <begin position="457"/>
        <end position="467"/>
    </location>
</feature>
<feature type="compositionally biased region" description="Low complexity" evidence="2">
    <location>
        <begin position="471"/>
        <end position="490"/>
    </location>
</feature>
<feature type="compositionally biased region" description="Low complexity" evidence="2">
    <location>
        <begin position="505"/>
        <end position="539"/>
    </location>
</feature>
<feature type="compositionally biased region" description="Acidic residues" evidence="2">
    <location>
        <begin position="540"/>
        <end position="556"/>
    </location>
</feature>
<feature type="compositionally biased region" description="Low complexity" evidence="2">
    <location>
        <begin position="607"/>
        <end position="620"/>
    </location>
</feature>
<comment type="function">
    <text evidence="1">Component of a DNA structure-specific endonuclease with substrate preference for branched DNA structures with a 5'-end at the branch nick. May be required in mitosis for the processing of stalled or collapsed replication fork intermediates. May be required in meiosis for the repair of meiosis-specific double strand breaks subsequent to single-end invasion (SEI) (By similarity).</text>
</comment>
<comment type="cofactor">
    <cofactor evidence="1">
        <name>Mg(2+)</name>
        <dbReference type="ChEBI" id="CHEBI:18420"/>
    </cofactor>
</comment>
<comment type="subunit">
    <text evidence="1">Interacts with eme1.</text>
</comment>
<comment type="subcellular location">
    <subcellularLocation>
        <location evidence="1">Nucleus</location>
    </subcellularLocation>
</comment>
<comment type="similarity">
    <text evidence="3">Belongs to the XPF family.</text>
</comment>
<gene>
    <name type="primary">mus81</name>
    <name type="ORF">DDB_G0276519</name>
</gene>
<reference key="1">
    <citation type="journal article" date="2002" name="Nature">
        <title>Sequence and analysis of chromosome 2 of Dictyostelium discoideum.</title>
        <authorList>
            <person name="Gloeckner G."/>
            <person name="Eichinger L."/>
            <person name="Szafranski K."/>
            <person name="Pachebat J.A."/>
            <person name="Bankier A.T."/>
            <person name="Dear P.H."/>
            <person name="Lehmann R."/>
            <person name="Baumgart C."/>
            <person name="Parra G."/>
            <person name="Abril J.F."/>
            <person name="Guigo R."/>
            <person name="Kumpf K."/>
            <person name="Tunggal B."/>
            <person name="Cox E.C."/>
            <person name="Quail M.A."/>
            <person name="Platzer M."/>
            <person name="Rosenthal A."/>
            <person name="Noegel A.A."/>
        </authorList>
    </citation>
    <scope>NUCLEOTIDE SEQUENCE [LARGE SCALE GENOMIC DNA]</scope>
    <source>
        <strain>AX4</strain>
    </source>
</reference>
<reference key="2">
    <citation type="journal article" date="2005" name="Nature">
        <title>The genome of the social amoeba Dictyostelium discoideum.</title>
        <authorList>
            <person name="Eichinger L."/>
            <person name="Pachebat J.A."/>
            <person name="Gloeckner G."/>
            <person name="Rajandream M.A."/>
            <person name="Sucgang R."/>
            <person name="Berriman M."/>
            <person name="Song J."/>
            <person name="Olsen R."/>
            <person name="Szafranski K."/>
            <person name="Xu Q."/>
            <person name="Tunggal B."/>
            <person name="Kummerfeld S."/>
            <person name="Madera M."/>
            <person name="Konfortov B.A."/>
            <person name="Rivero F."/>
            <person name="Bankier A.T."/>
            <person name="Lehmann R."/>
            <person name="Hamlin N."/>
            <person name="Davies R."/>
            <person name="Gaudet P."/>
            <person name="Fey P."/>
            <person name="Pilcher K."/>
            <person name="Chen G."/>
            <person name="Saunders D."/>
            <person name="Sodergren E.J."/>
            <person name="Davis P."/>
            <person name="Kerhornou A."/>
            <person name="Nie X."/>
            <person name="Hall N."/>
            <person name="Anjard C."/>
            <person name="Hemphill L."/>
            <person name="Bason N."/>
            <person name="Farbrother P."/>
            <person name="Desany B."/>
            <person name="Just E."/>
            <person name="Morio T."/>
            <person name="Rost R."/>
            <person name="Churcher C.M."/>
            <person name="Cooper J."/>
            <person name="Haydock S."/>
            <person name="van Driessche N."/>
            <person name="Cronin A."/>
            <person name="Goodhead I."/>
            <person name="Muzny D.M."/>
            <person name="Mourier T."/>
            <person name="Pain A."/>
            <person name="Lu M."/>
            <person name="Harper D."/>
            <person name="Lindsay R."/>
            <person name="Hauser H."/>
            <person name="James K.D."/>
            <person name="Quiles M."/>
            <person name="Madan Babu M."/>
            <person name="Saito T."/>
            <person name="Buchrieser C."/>
            <person name="Wardroper A."/>
            <person name="Felder M."/>
            <person name="Thangavelu M."/>
            <person name="Johnson D."/>
            <person name="Knights A."/>
            <person name="Loulseged H."/>
            <person name="Mungall K.L."/>
            <person name="Oliver K."/>
            <person name="Price C."/>
            <person name="Quail M.A."/>
            <person name="Urushihara H."/>
            <person name="Hernandez J."/>
            <person name="Rabbinowitsch E."/>
            <person name="Steffen D."/>
            <person name="Sanders M."/>
            <person name="Ma J."/>
            <person name="Kohara Y."/>
            <person name="Sharp S."/>
            <person name="Simmonds M.N."/>
            <person name="Spiegler S."/>
            <person name="Tivey A."/>
            <person name="Sugano S."/>
            <person name="White B."/>
            <person name="Walker D."/>
            <person name="Woodward J.R."/>
            <person name="Winckler T."/>
            <person name="Tanaka Y."/>
            <person name="Shaulsky G."/>
            <person name="Schleicher M."/>
            <person name="Weinstock G.M."/>
            <person name="Rosenthal A."/>
            <person name="Cox E.C."/>
            <person name="Chisholm R.L."/>
            <person name="Gibbs R.A."/>
            <person name="Loomis W.F."/>
            <person name="Platzer M."/>
            <person name="Kay R.R."/>
            <person name="Williams J.G."/>
            <person name="Dear P.H."/>
            <person name="Noegel A.A."/>
            <person name="Barrell B.G."/>
            <person name="Kuspa A."/>
        </authorList>
    </citation>
    <scope>NUCLEOTIDE SEQUENCE [LARGE SCALE GENOMIC DNA]</scope>
    <source>
        <strain>AX4</strain>
    </source>
</reference>
<organism>
    <name type="scientific">Dictyostelium discoideum</name>
    <name type="common">Social amoeba</name>
    <dbReference type="NCBI Taxonomy" id="44689"/>
    <lineage>
        <taxon>Eukaryota</taxon>
        <taxon>Amoebozoa</taxon>
        <taxon>Evosea</taxon>
        <taxon>Eumycetozoa</taxon>
        <taxon>Dictyostelia</taxon>
        <taxon>Dictyosteliales</taxon>
        <taxon>Dictyosteliaceae</taxon>
        <taxon>Dictyostelium</taxon>
    </lineage>
</organism>
<evidence type="ECO:0000250" key="1"/>
<evidence type="ECO:0000256" key="2">
    <source>
        <dbReference type="SAM" id="MobiDB-lite"/>
    </source>
</evidence>
<evidence type="ECO:0000305" key="3"/>
<name>MUS81_DICDI</name>
<sequence>MSTNKNHNNNTNNNDNNICINPHIVEFLNKQITNIKNRPGADIKTTSIYKKAIRSLNLYPLPVFSGKECEVLNGFGPSLTKKINDYLKTTSHPLYPKGPPTPLKSIYNRNNNNNDNNNNNNNNNNNNNNNNNNNNNNNNNNSPKKKIRKSKNNNTTSTISNTQSNLIGTESPSKNQNKQLERELKSKKKKQQSAILEQIVEEEDINFEIPTNENYYDYGSGSCFDNNDDNDDGYISSGINTTPDDLNKSFNFDFGSFDNGIPNYNNNNDNGGDNENNINSDIDSNKIKTTTSINDNHKEKYQKNNENYIHENEDNGDDVIVLISPIKTYKYGDMLNKSPSKFKSPSKLRSHNTTNTFNNSNFSNSDNDNNNNIRITTPLKNQNFNKFNDSIIFSPSISSPSPSKLSNYHKYLNNNNNNIKNTPISTSKKRKCNFSSPLLFSPFKYGVTSPFSPSKMKLKSPFKKRFKNDKSPSSSISKNKNSKSNDIVNNDFEDDDEVVNIQSESEINNNNNQFTSHNDNYNYSYNYNNNSNNINNNNNNDDDDDFDLTETEDEKDDYDKDDRTFSNLSVRLSFTEEDLAGVNIGESIINNSKLPKVIPSQIPPPTQSTQSTSTSTSTSKSKSKSTIKIKFKNIKCIIDNREVKSVTERDYICNKLNERGINAQVKKLELGDFVWVAIDEHDNEWLLNYIIERKRVDDLSSSIIDGRYKEQKFRLSKSGCDNIIYLIEGIVSNTINSSSQSQKKTWGTVNFSLSPDALATALVTTSICEGIIIKETKTIDNTIDYIVNITEYFKEKLLKNNNSGGGGGDEIIKFLFANKNTQCTLENFNQLNSKSKGLKLIEFFATQLIQIPGCSAEKAHSITQVYPTPMSLYLALKAIKDKESGESHFKDFTFGKNKRRFGQDVSEVIYNLYTNKKYLN</sequence>
<accession>Q551H0</accession>
<accession>Q8T856</accession>
<keyword id="KW-0227">DNA damage</keyword>
<keyword id="KW-0233">DNA recombination</keyword>
<keyword id="KW-0234">DNA repair</keyword>
<keyword id="KW-0255">Endonuclease</keyword>
<keyword id="KW-0378">Hydrolase</keyword>
<keyword id="KW-0460">Magnesium</keyword>
<keyword id="KW-0464">Manganese</keyword>
<keyword id="KW-0479">Metal-binding</keyword>
<keyword id="KW-0540">Nuclease</keyword>
<keyword id="KW-0539">Nucleus</keyword>
<keyword id="KW-1185">Reference proteome</keyword>
<dbReference type="EC" id="3.1.22.-"/>
<dbReference type="EMBL" id="AAFI02000015">
    <property type="protein sequence ID" value="EAL69213.1"/>
    <property type="molecule type" value="Genomic_DNA"/>
</dbReference>
<dbReference type="RefSeq" id="XP_643164.1">
    <property type="nucleotide sequence ID" value="XM_638072.1"/>
</dbReference>
<dbReference type="SMR" id="Q551H0"/>
<dbReference type="FunCoup" id="Q551H0">
    <property type="interactions" value="28"/>
</dbReference>
<dbReference type="STRING" id="44689.Q551H0"/>
<dbReference type="GlyGen" id="Q551H0">
    <property type="glycosylation" value="1 site"/>
</dbReference>
<dbReference type="PaxDb" id="44689-DDB0304698"/>
<dbReference type="EnsemblProtists" id="EAL69213">
    <property type="protein sequence ID" value="EAL69213"/>
    <property type="gene ID" value="DDB_G0276519"/>
</dbReference>
<dbReference type="GeneID" id="8620572"/>
<dbReference type="KEGG" id="ddi:DDB_G0276519"/>
<dbReference type="dictyBase" id="DDB_G0276519">
    <property type="gene designation" value="mus81"/>
</dbReference>
<dbReference type="VEuPathDB" id="AmoebaDB:DDB_G0276519"/>
<dbReference type="eggNOG" id="KOG2379">
    <property type="taxonomic scope" value="Eukaryota"/>
</dbReference>
<dbReference type="HOGENOM" id="CLU_316989_0_0_1"/>
<dbReference type="InParanoid" id="Q551H0"/>
<dbReference type="OMA" id="CIVDNRE"/>
<dbReference type="PRO" id="PR:Q551H0"/>
<dbReference type="Proteomes" id="UP000002195">
    <property type="component" value="Chromosome 2"/>
</dbReference>
<dbReference type="GO" id="GO:0048476">
    <property type="term" value="C:Holliday junction resolvase complex"/>
    <property type="evidence" value="ECO:0000318"/>
    <property type="project" value="GO_Central"/>
</dbReference>
<dbReference type="GO" id="GO:0005634">
    <property type="term" value="C:nucleus"/>
    <property type="evidence" value="ECO:0000318"/>
    <property type="project" value="GO_Central"/>
</dbReference>
<dbReference type="GO" id="GO:0048257">
    <property type="term" value="F:3'-flap endonuclease activity"/>
    <property type="evidence" value="ECO:0000318"/>
    <property type="project" value="GO_Central"/>
</dbReference>
<dbReference type="GO" id="GO:0008821">
    <property type="term" value="F:crossover junction DNA endonuclease activity"/>
    <property type="evidence" value="ECO:0007669"/>
    <property type="project" value="InterPro"/>
</dbReference>
<dbReference type="GO" id="GO:0003677">
    <property type="term" value="F:DNA binding"/>
    <property type="evidence" value="ECO:0007669"/>
    <property type="project" value="InterPro"/>
</dbReference>
<dbReference type="GO" id="GO:0046872">
    <property type="term" value="F:metal ion binding"/>
    <property type="evidence" value="ECO:0007669"/>
    <property type="project" value="UniProtKB-KW"/>
</dbReference>
<dbReference type="GO" id="GO:0006308">
    <property type="term" value="P:DNA catabolic process"/>
    <property type="evidence" value="ECO:0007669"/>
    <property type="project" value="InterPro"/>
</dbReference>
<dbReference type="GO" id="GO:0000727">
    <property type="term" value="P:double-strand break repair via break-induced replication"/>
    <property type="evidence" value="ECO:0000318"/>
    <property type="project" value="GO_Central"/>
</dbReference>
<dbReference type="GO" id="GO:0031573">
    <property type="term" value="P:mitotic intra-S DNA damage checkpoint signaling"/>
    <property type="evidence" value="ECO:0000318"/>
    <property type="project" value="GO_Central"/>
</dbReference>
<dbReference type="GO" id="GO:0000712">
    <property type="term" value="P:resolution of meiotic recombination intermediates"/>
    <property type="evidence" value="ECO:0000318"/>
    <property type="project" value="GO_Central"/>
</dbReference>
<dbReference type="CDD" id="cd20074">
    <property type="entry name" value="XPF_nuclease_Mus81"/>
    <property type="match status" value="1"/>
</dbReference>
<dbReference type="FunFam" id="3.40.50.10130:FF:000011">
    <property type="entry name" value="Crossover junction endonuclease MUS81"/>
    <property type="match status" value="1"/>
</dbReference>
<dbReference type="FunFam" id="1.10.150.110:FF:000018">
    <property type="entry name" value="Probable crossover junction endonuclease mus81"/>
    <property type="match status" value="1"/>
</dbReference>
<dbReference type="Gene3D" id="3.40.50.10130">
    <property type="match status" value="1"/>
</dbReference>
<dbReference type="Gene3D" id="1.10.150.670">
    <property type="entry name" value="Crossover junction endonuclease EME1, DNA-binding domain"/>
    <property type="match status" value="1"/>
</dbReference>
<dbReference type="Gene3D" id="1.10.150.110">
    <property type="entry name" value="DNA polymerase beta, N-terminal domain-like"/>
    <property type="match status" value="1"/>
</dbReference>
<dbReference type="InterPro" id="IPR027421">
    <property type="entry name" value="DNA_pol_lamdba_lyase_dom_sf"/>
</dbReference>
<dbReference type="InterPro" id="IPR042530">
    <property type="entry name" value="EME1/EME2_C"/>
</dbReference>
<dbReference type="InterPro" id="IPR006166">
    <property type="entry name" value="ERCC4_domain"/>
</dbReference>
<dbReference type="InterPro" id="IPR033309">
    <property type="entry name" value="Mus81"/>
</dbReference>
<dbReference type="InterPro" id="IPR011335">
    <property type="entry name" value="Restrct_endonuc-II-like"/>
</dbReference>
<dbReference type="InterPro" id="IPR047416">
    <property type="entry name" value="XPF_nuclease_Mus81"/>
</dbReference>
<dbReference type="PANTHER" id="PTHR13451">
    <property type="entry name" value="CLASS II CROSSOVER JUNCTION ENDONUCLEASE MUS81"/>
    <property type="match status" value="1"/>
</dbReference>
<dbReference type="PANTHER" id="PTHR13451:SF8">
    <property type="entry name" value="CROSSOVER JUNCTION ENDONUCLEASE MUS81-RELATED"/>
    <property type="match status" value="1"/>
</dbReference>
<dbReference type="Pfam" id="PF02732">
    <property type="entry name" value="ERCC4"/>
    <property type="match status" value="1"/>
</dbReference>
<dbReference type="SMART" id="SM00891">
    <property type="entry name" value="ERCC4"/>
    <property type="match status" value="1"/>
</dbReference>
<dbReference type="SUPFAM" id="SSF47802">
    <property type="entry name" value="DNA polymerase beta, N-terminal domain-like"/>
    <property type="match status" value="1"/>
</dbReference>
<dbReference type="SUPFAM" id="SSF52980">
    <property type="entry name" value="Restriction endonuclease-like"/>
    <property type="match status" value="1"/>
</dbReference>
<proteinExistence type="inferred from homology"/>